<gene>
    <name evidence="4" type="primary">pigD</name>
</gene>
<comment type="function">
    <text evidence="3">Involved in the biosynthesis of 2-methyl-3-n-amyl-pyrrole (MAP), one of the terminal products involved in the biosynthesis of the red antibiotic prodigiosin (Pig). Catalyzes the decarboxylation of pyruvate, followed by the modification of the resulting two-carbon fragment acetaldehyde at the C3 position of the 2-octenal (1,2-addition of acetaldehyde) giving 3-acetyloctanal. In vitro, it can act on a number of alpha,beta-unsaturated carbonyl compounds, including aldehydes and ketones, and can catalyze both 1,2-addition and Stetter-type 1,4-addition depending on the substrate.</text>
</comment>
<comment type="catalytic activity">
    <reaction evidence="3">
        <text>(2E)-octenal + pyruvate + H(+) = (S)-3-acetyloctanal + CO2</text>
        <dbReference type="Rhea" id="RHEA:42832"/>
        <dbReference type="ChEBI" id="CHEBI:15361"/>
        <dbReference type="ChEBI" id="CHEBI:15378"/>
        <dbReference type="ChEBI" id="CHEBI:16526"/>
        <dbReference type="ChEBI" id="CHEBI:61748"/>
        <dbReference type="ChEBI" id="CHEBI:82759"/>
        <dbReference type="EC" id="2.2.1.12"/>
    </reaction>
</comment>
<comment type="cofactor">
    <cofactor evidence="3">
        <name>thiamine diphosphate</name>
        <dbReference type="ChEBI" id="CHEBI:58937"/>
    </cofactor>
</comment>
<comment type="pathway">
    <text evidence="1 6">Antibiotic biosynthesis; prodigiosin biosynthesis.</text>
</comment>
<comment type="similarity">
    <text evidence="6">Belongs to the TPP enzyme family.</text>
</comment>
<organism>
    <name type="scientific">Serratia marcescens</name>
    <dbReference type="NCBI Taxonomy" id="615"/>
    <lineage>
        <taxon>Bacteria</taxon>
        <taxon>Pseudomonadati</taxon>
        <taxon>Pseudomonadota</taxon>
        <taxon>Gammaproteobacteria</taxon>
        <taxon>Enterobacterales</taxon>
        <taxon>Yersiniaceae</taxon>
        <taxon>Serratia</taxon>
    </lineage>
</organism>
<protein>
    <recommendedName>
        <fullName evidence="6">Thiamine diphosphate dependent-3-acetyloctanal synthase PigD</fullName>
        <shortName evidence="5">ThDP-dependent enzyme PigD</shortName>
        <ecNumber evidence="3">2.2.1.12</ecNumber>
    </recommendedName>
</protein>
<keyword id="KW-0045">Antibiotic biosynthesis</keyword>
<keyword id="KW-0786">Thiamine pyrophosphate</keyword>
<keyword id="KW-0808">Transferase</keyword>
<name>PIGD_SERMA</name>
<evidence type="ECO:0000250" key="1">
    <source>
        <dbReference type="UniProtKB" id="Q5W268"/>
    </source>
</evidence>
<evidence type="ECO:0000256" key="2">
    <source>
        <dbReference type="SAM" id="MobiDB-lite"/>
    </source>
</evidence>
<evidence type="ECO:0000269" key="3">
    <source>
    </source>
</evidence>
<evidence type="ECO:0000303" key="4">
    <source>
    </source>
</evidence>
<evidence type="ECO:0000303" key="5">
    <source>
    </source>
</evidence>
<evidence type="ECO:0000305" key="6"/>
<feature type="chain" id="PRO_0000436239" description="Thiamine diphosphate dependent-3-acetyloctanal synthase PigD">
    <location>
        <begin position="1"/>
        <end position="904"/>
    </location>
</feature>
<feature type="region of interest" description="Disordered" evidence="2">
    <location>
        <begin position="879"/>
        <end position="904"/>
    </location>
</feature>
<feature type="compositionally biased region" description="Polar residues" evidence="2">
    <location>
        <begin position="886"/>
        <end position="904"/>
    </location>
</feature>
<accession>Q5W251</accession>
<proteinExistence type="evidence at protein level"/>
<dbReference type="EC" id="2.2.1.12" evidence="3"/>
<dbReference type="EMBL" id="AJ833002">
    <property type="protein sequence ID" value="CAH55649.1"/>
    <property type="molecule type" value="Genomic_DNA"/>
</dbReference>
<dbReference type="SMR" id="Q5W251"/>
<dbReference type="BioCyc" id="MetaCyc:MONOMER-18822"/>
<dbReference type="BRENDA" id="2.2.1.12">
    <property type="organism ID" value="5690"/>
</dbReference>
<dbReference type="UniPathway" id="UPA01072"/>
<dbReference type="GO" id="GO:0030976">
    <property type="term" value="F:thiamine pyrophosphate binding"/>
    <property type="evidence" value="ECO:0000314"/>
    <property type="project" value="UniProtKB"/>
</dbReference>
<dbReference type="GO" id="GO:0016744">
    <property type="term" value="F:transketolase or transaldolase activity"/>
    <property type="evidence" value="ECO:0000314"/>
    <property type="project" value="UniProtKB"/>
</dbReference>
<dbReference type="GO" id="GO:0017000">
    <property type="term" value="P:antibiotic biosynthetic process"/>
    <property type="evidence" value="ECO:0000250"/>
    <property type="project" value="UniProtKB"/>
</dbReference>
<dbReference type="InterPro" id="IPR029061">
    <property type="entry name" value="THDP-binding"/>
</dbReference>
<dbReference type="SUPFAM" id="SSF52518">
    <property type="entry name" value="Thiamin diphosphate-binding fold (THDP-binding)"/>
    <property type="match status" value="1"/>
</dbReference>
<sequence length="904" mass="101200">MRAATAACRDRRGLCRAEFARLAEAVTPFWLHKELIMTTLTGQARLTNSAAYEQVWQAERQACRTDADPDTLTVGVVVVTRNPAFFQTGLSVLNDIRDYVFNRVHIQSEMPLKLLDLAADSLYLAAREKALHFLKGQNKAINVRIIQCASLAEATGKIIYTHALEQRPEFHLGMLFYDQTTPAGVDDSIEQIDRDLDAFYSALQRSGIPAFYTTFSTVAFIRQLRSPFRYLPQQYREIVRSEDPAIFQTELLCLWMDFFEMNYTNRRVKPIGALALHNTLGEQLIQFFERTAAERWLVSYYTGSIISNLIGYLDRHAEARGALILRGPNEHAIACGAMANWQLYRMPFLGVVTSGMMDEFKGTLANLKETAAQGIIVAAENRGNQWYSFQGTLTPTEDMREVLIARRIPFVYIDDVEMIGAGLTEAFRLYHQGQGPVVILATQNVLESTLSLEGAVCDPSPIPVLSADDPLPMSESLAQAIALINRGPERLVWQLGPVSDDEYALIHDIADAAGIALVDSLAHPGSAPKYYQGRRNPHYLGTLAIYGYSPRVYNFLHTNDKLNAMSEQSLFMIKSRVAQITTPFSDGRLERKVHLVQLTHDDRHLSAYADLHLHMNCLAFLRTVKAHLDVDPALRERRRALIAAYLDSPSDVVSQLPSLPMSANYFFCQLNRVIEELIETEGFDFTGVYDVGRCGISAARNVAKTRRGFSGWYGRALMGDALLATGYLAYTSPSHVMAFIGDGAKGIVPDILPAFIDNILTHPQLLNKSITVFYLCNGGLSVINTYQERILFNRTSRQMRLVNVEQPDVEQTVNNFHIQSKTLTHFDEDVIRQALTTSHRLNLFSVVLGHNNEGDGISPGHRQRLAALIRADHDALQERKAWAAQQPESTSTAFDQDPTQEATS</sequence>
<reference key="1">
    <citation type="journal article" date="2004" name="Microbiology">
        <title>The Serratia gene cluster encoding biosynthesis of the red antibiotic, prodigiosin, shows species- and strain-dependent genome context variation.</title>
        <authorList>
            <person name="Harris A.K."/>
            <person name="Williamson N.R."/>
            <person name="Slater H."/>
            <person name="Cox A."/>
            <person name="Abbasi S."/>
            <person name="Foulds I."/>
            <person name="Simonsen H.T."/>
            <person name="Leeper F.J."/>
            <person name="Salmond G.P."/>
        </authorList>
    </citation>
    <scope>NUCLEOTIDE SEQUENCE [GENOMIC DNA]</scope>
    <source>
        <strain>ATCC 274 / NCDO 740 / NCIB 1377 / NCTC 1377</strain>
    </source>
</reference>
<reference key="2">
    <citation type="journal article" date="2010" name="Angew. Chem. Int. Ed.">
        <title>The enzymatic asymmetric conjugate umpolung reaction.</title>
        <authorList>
            <person name="Dresen C."/>
            <person name="Richter M."/>
            <person name="Pohl M."/>
            <person name="Luedeke S."/>
            <person name="Mueller M."/>
        </authorList>
    </citation>
    <scope>FUNCTION</scope>
    <scope>CATALYTIC ACTIVITY</scope>
    <scope>COFACTOR</scope>
    <scope>SUBSTRATE SPECIFICITY</scope>
    <source>
        <strain>ATCC 274 / NCDO 740 / NCIB 1377 / NCTC 1377</strain>
    </source>
</reference>